<sequence length="838" mass="94344">MLKAIAHKVFGSRNERYLKGLRPLIEAINAFEPQIQALSDDAMRARVAELRQEVAEGRPLDDVLPETFAIVREASVRSLGMRHYDVQLIGGITLHQGKIAEMKTGEGKTLVATLPVVLNALSGKGVHLITVNDYLAKRDAAWMGKLYGFLGLSVGVIVHGLDDQQRQAAYGADITYGTNNEFGFDYLRDNMKFYQEQLVQRPLNFAIVDEVDSILIDEARTPLIISGQAEDSSTLYARVNALIPMLRRETHFTVDEKARTVLLTDEGVARMEDVLKIDNLFDPANITLQHHVLQALKAHHIFQRDVDYVVKDGQVIIVDEFTGRLMPGRRYSDGLHQALEAKELVQVEAENQTLATITFQNYFRMYKKLSGMTGTADTEAVEFREIYGLEVISIPTNKPMVRKDFPDLVYKTQREKFEAIAADVKDLHKRGQPVLVGTVSIEKSELLSDMLKKTGVPHDVLNAKNHEKEAEIVALAGHAGKVTIATNMAGRGTDIVLGPGVTDLGGLHILGTERHESRRIDNQLRGRSGRQGDPGSSRFYLALDDDLMRLFGSDRLKGLMDKLGMEDGEPIENRMVSRAIENAQKRVEAHNFEIRKQLLDYDNVMNQQREVIYSRRRELMGSDEPETFVQEHIEEIVDEIFAPFAALKGEPDPELLEVAAAQIEDILDYKIELADGGEAEKQAVLEAVTGRQRELAETAGAHYKEVARYFLLDSLDRHWKEHLLSMDHLRDGIGLRGYGQKDPKQEYKREGFELFQQLIYNMRDAAIRALSRVRIRAEVQEQEFQHKDETANVQYSGPAESAEDAKKEPKRREAPKVGRNDPCPCGSGKKYKKCHGAK</sequence>
<accession>C4XJ72</accession>
<gene>
    <name evidence="1" type="primary">secA</name>
    <name type="ordered locus">DMR_07450</name>
</gene>
<keyword id="KW-0067">ATP-binding</keyword>
<keyword id="KW-0997">Cell inner membrane</keyword>
<keyword id="KW-1003">Cell membrane</keyword>
<keyword id="KW-0963">Cytoplasm</keyword>
<keyword id="KW-0472">Membrane</keyword>
<keyword id="KW-0479">Metal-binding</keyword>
<keyword id="KW-0547">Nucleotide-binding</keyword>
<keyword id="KW-0653">Protein transport</keyword>
<keyword id="KW-1278">Translocase</keyword>
<keyword id="KW-0811">Translocation</keyword>
<keyword id="KW-0813">Transport</keyword>
<keyword id="KW-0862">Zinc</keyword>
<protein>
    <recommendedName>
        <fullName evidence="1">Protein translocase subunit SecA</fullName>
        <ecNumber evidence="1">7.4.2.8</ecNumber>
    </recommendedName>
</protein>
<dbReference type="EC" id="7.4.2.8" evidence="1"/>
<dbReference type="EMBL" id="AP010904">
    <property type="protein sequence ID" value="BAH74236.1"/>
    <property type="molecule type" value="Genomic_DNA"/>
</dbReference>
<dbReference type="RefSeq" id="WP_012750311.1">
    <property type="nucleotide sequence ID" value="NC_012796.1"/>
</dbReference>
<dbReference type="SMR" id="C4XJ72"/>
<dbReference type="STRING" id="573370.DMR_07450"/>
<dbReference type="KEGG" id="dma:DMR_07450"/>
<dbReference type="eggNOG" id="COG0653">
    <property type="taxonomic scope" value="Bacteria"/>
</dbReference>
<dbReference type="HOGENOM" id="CLU_005314_3_0_7"/>
<dbReference type="OrthoDB" id="9805579at2"/>
<dbReference type="Proteomes" id="UP000009071">
    <property type="component" value="Chromosome"/>
</dbReference>
<dbReference type="GO" id="GO:0031522">
    <property type="term" value="C:cell envelope Sec protein transport complex"/>
    <property type="evidence" value="ECO:0007669"/>
    <property type="project" value="TreeGrafter"/>
</dbReference>
<dbReference type="GO" id="GO:0005829">
    <property type="term" value="C:cytosol"/>
    <property type="evidence" value="ECO:0007669"/>
    <property type="project" value="TreeGrafter"/>
</dbReference>
<dbReference type="GO" id="GO:0005886">
    <property type="term" value="C:plasma membrane"/>
    <property type="evidence" value="ECO:0007669"/>
    <property type="project" value="UniProtKB-SubCell"/>
</dbReference>
<dbReference type="GO" id="GO:0005524">
    <property type="term" value="F:ATP binding"/>
    <property type="evidence" value="ECO:0007669"/>
    <property type="project" value="UniProtKB-UniRule"/>
</dbReference>
<dbReference type="GO" id="GO:0046872">
    <property type="term" value="F:metal ion binding"/>
    <property type="evidence" value="ECO:0007669"/>
    <property type="project" value="UniProtKB-KW"/>
</dbReference>
<dbReference type="GO" id="GO:0008564">
    <property type="term" value="F:protein-exporting ATPase activity"/>
    <property type="evidence" value="ECO:0007669"/>
    <property type="project" value="UniProtKB-EC"/>
</dbReference>
<dbReference type="GO" id="GO:0065002">
    <property type="term" value="P:intracellular protein transmembrane transport"/>
    <property type="evidence" value="ECO:0007669"/>
    <property type="project" value="UniProtKB-UniRule"/>
</dbReference>
<dbReference type="GO" id="GO:0017038">
    <property type="term" value="P:protein import"/>
    <property type="evidence" value="ECO:0007669"/>
    <property type="project" value="InterPro"/>
</dbReference>
<dbReference type="GO" id="GO:0006605">
    <property type="term" value="P:protein targeting"/>
    <property type="evidence" value="ECO:0007669"/>
    <property type="project" value="UniProtKB-UniRule"/>
</dbReference>
<dbReference type="GO" id="GO:0043952">
    <property type="term" value="P:protein transport by the Sec complex"/>
    <property type="evidence" value="ECO:0007669"/>
    <property type="project" value="TreeGrafter"/>
</dbReference>
<dbReference type="CDD" id="cd17928">
    <property type="entry name" value="DEXDc_SecA"/>
    <property type="match status" value="1"/>
</dbReference>
<dbReference type="CDD" id="cd18803">
    <property type="entry name" value="SF2_C_secA"/>
    <property type="match status" value="1"/>
</dbReference>
<dbReference type="FunFam" id="3.40.50.300:FF:000429">
    <property type="entry name" value="Preprotein translocase subunit SecA"/>
    <property type="match status" value="1"/>
</dbReference>
<dbReference type="FunFam" id="3.90.1440.10:FF:000001">
    <property type="entry name" value="Preprotein translocase subunit SecA"/>
    <property type="match status" value="1"/>
</dbReference>
<dbReference type="FunFam" id="3.40.50.300:FF:000334">
    <property type="entry name" value="Protein translocase subunit SecA"/>
    <property type="match status" value="1"/>
</dbReference>
<dbReference type="Gene3D" id="1.10.3060.10">
    <property type="entry name" value="Helical scaffold and wing domains of SecA"/>
    <property type="match status" value="1"/>
</dbReference>
<dbReference type="Gene3D" id="3.40.50.300">
    <property type="entry name" value="P-loop containing nucleotide triphosphate hydrolases"/>
    <property type="match status" value="3"/>
</dbReference>
<dbReference type="Gene3D" id="3.90.1440.10">
    <property type="entry name" value="SecA, preprotein cross-linking domain"/>
    <property type="match status" value="1"/>
</dbReference>
<dbReference type="HAMAP" id="MF_01382">
    <property type="entry name" value="SecA"/>
    <property type="match status" value="1"/>
</dbReference>
<dbReference type="InterPro" id="IPR014001">
    <property type="entry name" value="Helicase_ATP-bd"/>
</dbReference>
<dbReference type="InterPro" id="IPR001650">
    <property type="entry name" value="Helicase_C-like"/>
</dbReference>
<dbReference type="InterPro" id="IPR027417">
    <property type="entry name" value="P-loop_NTPase"/>
</dbReference>
<dbReference type="InterPro" id="IPR004027">
    <property type="entry name" value="SEC_C_motif"/>
</dbReference>
<dbReference type="InterPro" id="IPR000185">
    <property type="entry name" value="SecA"/>
</dbReference>
<dbReference type="InterPro" id="IPR020937">
    <property type="entry name" value="SecA_CS"/>
</dbReference>
<dbReference type="InterPro" id="IPR011115">
    <property type="entry name" value="SecA_DEAD"/>
</dbReference>
<dbReference type="InterPro" id="IPR014018">
    <property type="entry name" value="SecA_motor_DEAD"/>
</dbReference>
<dbReference type="InterPro" id="IPR011130">
    <property type="entry name" value="SecA_preprotein_X-link_dom"/>
</dbReference>
<dbReference type="InterPro" id="IPR044722">
    <property type="entry name" value="SecA_SF2_C"/>
</dbReference>
<dbReference type="InterPro" id="IPR011116">
    <property type="entry name" value="SecA_Wing/Scaffold"/>
</dbReference>
<dbReference type="InterPro" id="IPR036266">
    <property type="entry name" value="SecA_Wing/Scaffold_sf"/>
</dbReference>
<dbReference type="InterPro" id="IPR036670">
    <property type="entry name" value="SecA_X-link_sf"/>
</dbReference>
<dbReference type="NCBIfam" id="NF006630">
    <property type="entry name" value="PRK09200.1"/>
    <property type="match status" value="1"/>
</dbReference>
<dbReference type="NCBIfam" id="NF009538">
    <property type="entry name" value="PRK12904.1"/>
    <property type="match status" value="1"/>
</dbReference>
<dbReference type="NCBIfam" id="TIGR00963">
    <property type="entry name" value="secA"/>
    <property type="match status" value="1"/>
</dbReference>
<dbReference type="PANTHER" id="PTHR30612:SF0">
    <property type="entry name" value="CHLOROPLAST PROTEIN-TRANSPORTING ATPASE"/>
    <property type="match status" value="1"/>
</dbReference>
<dbReference type="PANTHER" id="PTHR30612">
    <property type="entry name" value="SECA INNER MEMBRANE COMPONENT OF SEC PROTEIN SECRETION SYSTEM"/>
    <property type="match status" value="1"/>
</dbReference>
<dbReference type="Pfam" id="PF21090">
    <property type="entry name" value="P-loop_SecA"/>
    <property type="match status" value="2"/>
</dbReference>
<dbReference type="Pfam" id="PF02810">
    <property type="entry name" value="SEC-C"/>
    <property type="match status" value="1"/>
</dbReference>
<dbReference type="Pfam" id="PF07517">
    <property type="entry name" value="SecA_DEAD"/>
    <property type="match status" value="1"/>
</dbReference>
<dbReference type="Pfam" id="PF01043">
    <property type="entry name" value="SecA_PP_bind"/>
    <property type="match status" value="1"/>
</dbReference>
<dbReference type="Pfam" id="PF07516">
    <property type="entry name" value="SecA_SW"/>
    <property type="match status" value="1"/>
</dbReference>
<dbReference type="PRINTS" id="PR00906">
    <property type="entry name" value="SECA"/>
</dbReference>
<dbReference type="SMART" id="SM00957">
    <property type="entry name" value="SecA_DEAD"/>
    <property type="match status" value="1"/>
</dbReference>
<dbReference type="SMART" id="SM00958">
    <property type="entry name" value="SecA_PP_bind"/>
    <property type="match status" value="1"/>
</dbReference>
<dbReference type="SUPFAM" id="SSF81886">
    <property type="entry name" value="Helical scaffold and wing domains of SecA"/>
    <property type="match status" value="1"/>
</dbReference>
<dbReference type="SUPFAM" id="SSF52540">
    <property type="entry name" value="P-loop containing nucleoside triphosphate hydrolases"/>
    <property type="match status" value="2"/>
</dbReference>
<dbReference type="SUPFAM" id="SSF81767">
    <property type="entry name" value="Pre-protein crosslinking domain of SecA"/>
    <property type="match status" value="1"/>
</dbReference>
<dbReference type="PROSITE" id="PS01312">
    <property type="entry name" value="SECA"/>
    <property type="match status" value="1"/>
</dbReference>
<dbReference type="PROSITE" id="PS51196">
    <property type="entry name" value="SECA_MOTOR_DEAD"/>
    <property type="match status" value="1"/>
</dbReference>
<comment type="function">
    <text evidence="1">Part of the Sec protein translocase complex. Interacts with the SecYEG preprotein conducting channel. Has a central role in coupling the hydrolysis of ATP to the transfer of proteins into and across the cell membrane, serving as an ATP-driven molecular motor driving the stepwise translocation of polypeptide chains across the membrane.</text>
</comment>
<comment type="catalytic activity">
    <reaction evidence="1">
        <text>ATP + H2O + cellular proteinSide 1 = ADP + phosphate + cellular proteinSide 2.</text>
        <dbReference type="EC" id="7.4.2.8"/>
    </reaction>
</comment>
<comment type="cofactor">
    <cofactor evidence="1">
        <name>Zn(2+)</name>
        <dbReference type="ChEBI" id="CHEBI:29105"/>
    </cofactor>
    <text evidence="1">May bind 1 zinc ion per subunit.</text>
</comment>
<comment type="subunit">
    <text evidence="1">Monomer and homodimer. Part of the essential Sec protein translocation apparatus which comprises SecA, SecYEG and auxiliary proteins SecDF-YajC and YidC.</text>
</comment>
<comment type="subcellular location">
    <subcellularLocation>
        <location evidence="1">Cell inner membrane</location>
        <topology evidence="1">Peripheral membrane protein</topology>
        <orientation evidence="1">Cytoplasmic side</orientation>
    </subcellularLocation>
    <subcellularLocation>
        <location evidence="1">Cytoplasm</location>
    </subcellularLocation>
    <text evidence="1">Distribution is 50-50.</text>
</comment>
<comment type="similarity">
    <text evidence="1">Belongs to the SecA family.</text>
</comment>
<feature type="chain" id="PRO_1000215108" description="Protein translocase subunit SecA">
    <location>
        <begin position="1"/>
        <end position="838"/>
    </location>
</feature>
<feature type="region of interest" description="Disordered" evidence="2">
    <location>
        <begin position="781"/>
        <end position="838"/>
    </location>
</feature>
<feature type="compositionally biased region" description="Basic and acidic residues" evidence="2">
    <location>
        <begin position="781"/>
        <end position="790"/>
    </location>
</feature>
<feature type="compositionally biased region" description="Basic and acidic residues" evidence="2">
    <location>
        <begin position="803"/>
        <end position="819"/>
    </location>
</feature>
<feature type="compositionally biased region" description="Basic residues" evidence="2">
    <location>
        <begin position="829"/>
        <end position="838"/>
    </location>
</feature>
<feature type="binding site" evidence="1">
    <location>
        <position position="87"/>
    </location>
    <ligand>
        <name>ATP</name>
        <dbReference type="ChEBI" id="CHEBI:30616"/>
    </ligand>
</feature>
<feature type="binding site" evidence="1">
    <location>
        <begin position="105"/>
        <end position="109"/>
    </location>
    <ligand>
        <name>ATP</name>
        <dbReference type="ChEBI" id="CHEBI:30616"/>
    </ligand>
</feature>
<feature type="binding site" evidence="1">
    <location>
        <position position="494"/>
    </location>
    <ligand>
        <name>ATP</name>
        <dbReference type="ChEBI" id="CHEBI:30616"/>
    </ligand>
</feature>
<feature type="binding site" evidence="1">
    <location>
        <position position="823"/>
    </location>
    <ligand>
        <name>Zn(2+)</name>
        <dbReference type="ChEBI" id="CHEBI:29105"/>
    </ligand>
</feature>
<feature type="binding site" evidence="1">
    <location>
        <position position="825"/>
    </location>
    <ligand>
        <name>Zn(2+)</name>
        <dbReference type="ChEBI" id="CHEBI:29105"/>
    </ligand>
</feature>
<feature type="binding site" evidence="1">
    <location>
        <position position="834"/>
    </location>
    <ligand>
        <name>Zn(2+)</name>
        <dbReference type="ChEBI" id="CHEBI:29105"/>
    </ligand>
</feature>
<feature type="binding site" evidence="1">
    <location>
        <position position="835"/>
    </location>
    <ligand>
        <name>Zn(2+)</name>
        <dbReference type="ChEBI" id="CHEBI:29105"/>
    </ligand>
</feature>
<name>SECA_SOLM1</name>
<evidence type="ECO:0000255" key="1">
    <source>
        <dbReference type="HAMAP-Rule" id="MF_01382"/>
    </source>
</evidence>
<evidence type="ECO:0000256" key="2">
    <source>
        <dbReference type="SAM" id="MobiDB-lite"/>
    </source>
</evidence>
<organism>
    <name type="scientific">Solidesulfovibrio magneticus (strain ATCC 700980 / DSM 13731 / RS-1)</name>
    <name type="common">Desulfovibrio magneticus</name>
    <dbReference type="NCBI Taxonomy" id="573370"/>
    <lineage>
        <taxon>Bacteria</taxon>
        <taxon>Pseudomonadati</taxon>
        <taxon>Thermodesulfobacteriota</taxon>
        <taxon>Desulfovibrionia</taxon>
        <taxon>Desulfovibrionales</taxon>
        <taxon>Desulfovibrionaceae</taxon>
        <taxon>Solidesulfovibrio</taxon>
    </lineage>
</organism>
<reference key="1">
    <citation type="journal article" date="2009" name="Genome Res.">
        <title>Whole genome sequence of Desulfovibrio magneticus strain RS-1 revealed common gene clusters in magnetotactic bacteria.</title>
        <authorList>
            <person name="Nakazawa H."/>
            <person name="Arakaki A."/>
            <person name="Narita-Yamada S."/>
            <person name="Yashiro I."/>
            <person name="Jinno K."/>
            <person name="Aoki N."/>
            <person name="Tsuruyama A."/>
            <person name="Okamura Y."/>
            <person name="Tanikawa S."/>
            <person name="Fujita N."/>
            <person name="Takeyama H."/>
            <person name="Matsunaga T."/>
        </authorList>
    </citation>
    <scope>NUCLEOTIDE SEQUENCE [LARGE SCALE GENOMIC DNA]</scope>
    <source>
        <strain>ATCC 700980 / DSM 13731 / RS-1</strain>
    </source>
</reference>
<proteinExistence type="inferred from homology"/>